<organism>
    <name type="scientific">Homo sapiens</name>
    <name type="common">Human</name>
    <dbReference type="NCBI Taxonomy" id="9606"/>
    <lineage>
        <taxon>Eukaryota</taxon>
        <taxon>Metazoa</taxon>
        <taxon>Chordata</taxon>
        <taxon>Craniata</taxon>
        <taxon>Vertebrata</taxon>
        <taxon>Euteleostomi</taxon>
        <taxon>Mammalia</taxon>
        <taxon>Eutheria</taxon>
        <taxon>Euarchontoglires</taxon>
        <taxon>Primates</taxon>
        <taxon>Haplorrhini</taxon>
        <taxon>Catarrhini</taxon>
        <taxon>Hominidae</taxon>
        <taxon>Homo</taxon>
    </lineage>
</organism>
<evidence type="ECO:0000255" key="1"/>
<evidence type="ECO:0000256" key="2">
    <source>
        <dbReference type="SAM" id="MobiDB-lite"/>
    </source>
</evidence>
<evidence type="ECO:0000269" key="3">
    <source>
    </source>
</evidence>
<evidence type="ECO:0000269" key="4">
    <source>
    </source>
</evidence>
<evidence type="ECO:0000269" key="5">
    <source>
    </source>
</evidence>
<evidence type="ECO:0000269" key="6">
    <source>
    </source>
</evidence>
<evidence type="ECO:0000269" key="7">
    <source>
    </source>
</evidence>
<evidence type="ECO:0000269" key="8">
    <source>
    </source>
</evidence>
<evidence type="ECO:0000303" key="9">
    <source ref="5"/>
</evidence>
<evidence type="ECO:0000305" key="10"/>
<accession>Q07092</accession>
<accession>Q16593</accession>
<accession>Q59F89</accession>
<accession>Q71RG9</accession>
<feature type="signal peptide" evidence="4 7">
    <location>
        <begin position="1"/>
        <end position="21"/>
    </location>
</feature>
<feature type="chain" id="PRO_0000005792" description="Collagen alpha-1(XVI) chain">
    <location>
        <begin position="22"/>
        <end position="1604"/>
    </location>
</feature>
<feature type="domain" description="Laminin G-like">
    <location>
        <begin position="50"/>
        <end position="231"/>
    </location>
</feature>
<feature type="domain" description="Collagen-like 1">
    <location>
        <begin position="375"/>
        <end position="423"/>
    </location>
</feature>
<feature type="domain" description="Collagen-like 2">
    <location>
        <begin position="573"/>
        <end position="633"/>
    </location>
</feature>
<feature type="domain" description="Collagen-like 3">
    <location>
        <begin position="667"/>
        <end position="721"/>
    </location>
</feature>
<feature type="domain" description="Collagen-like 4">
    <location>
        <begin position="788"/>
        <end position="840"/>
    </location>
</feature>
<feature type="domain" description="Collagen-like 5">
    <location>
        <begin position="888"/>
        <end position="938"/>
    </location>
</feature>
<feature type="domain" description="Collagen-like 6">
    <location>
        <begin position="1018"/>
        <end position="1075"/>
    </location>
</feature>
<feature type="domain" description="Collagen-like 7">
    <location>
        <begin position="1472"/>
        <end position="1524"/>
    </location>
</feature>
<feature type="domain" description="Collagen-like 8">
    <location>
        <begin position="1528"/>
        <end position="1576"/>
    </location>
</feature>
<feature type="region of interest" description="Nonhelical region 10 (NC10)">
    <location>
        <begin position="232"/>
        <end position="374"/>
    </location>
</feature>
<feature type="region of interest" description="Disordered" evidence="2">
    <location>
        <begin position="301"/>
        <end position="509"/>
    </location>
</feature>
<feature type="region of interest" description="Triple-helical region 9 (COL9) with 3 imperfections">
    <location>
        <begin position="375"/>
        <end position="506"/>
    </location>
</feature>
<feature type="region of interest" description="Nonhelical region 9 (NC9)">
    <location>
        <begin position="507"/>
        <end position="521"/>
    </location>
</feature>
<feature type="region of interest" description="Triple-helical region 8 (COL8) with 1 imperfection">
    <location>
        <begin position="522"/>
        <end position="555"/>
    </location>
</feature>
<feature type="region of interest" description="Nonhelical region 8 (NC8)">
    <location>
        <begin position="556"/>
        <end position="572"/>
    </location>
</feature>
<feature type="region of interest" description="Triple-helical region 7 (COL7) with 1 imperfection">
    <location>
        <begin position="573"/>
        <end position="631"/>
    </location>
</feature>
<feature type="region of interest" description="Disordered" evidence="2">
    <location>
        <begin position="604"/>
        <end position="917"/>
    </location>
</feature>
<feature type="region of interest" description="Nonhelical region 7 (NC7)">
    <location>
        <begin position="632"/>
        <end position="652"/>
    </location>
</feature>
<feature type="region of interest" description="Triple-helical region 6 (COL6) with 1 imperfection">
    <location>
        <begin position="653"/>
        <end position="723"/>
    </location>
</feature>
<feature type="region of interest" description="Nonhelical region 6 (NC6)">
    <location>
        <begin position="724"/>
        <end position="738"/>
    </location>
</feature>
<feature type="region of interest" description="Triple-helical region 5 (COL5) with 3 imperfections">
    <location>
        <begin position="739"/>
        <end position="876"/>
    </location>
</feature>
<feature type="region of interest" description="Nonhelical region 5 (NC5)">
    <location>
        <begin position="877"/>
        <end position="887"/>
    </location>
</feature>
<feature type="region of interest" description="Triple-helical region 4 (COL4) with 2 imperfections">
    <location>
        <begin position="888"/>
        <end position="939"/>
    </location>
</feature>
<feature type="region of interest" description="Nonhelical region 4 (NC4)">
    <location>
        <begin position="940"/>
        <end position="973"/>
    </location>
</feature>
<feature type="region of interest" description="Triple-helical region 3 (COL3)">
    <location>
        <begin position="974"/>
        <end position="988"/>
    </location>
</feature>
<feature type="region of interest" description="Nonhelical region 3 (NC3)">
    <location>
        <begin position="989"/>
        <end position="1011"/>
    </location>
</feature>
<feature type="region of interest" description="Disordered" evidence="2">
    <location>
        <begin position="1001"/>
        <end position="1429"/>
    </location>
</feature>
<feature type="region of interest" description="Triple-helical region 2 (COL2) with 2 imperfections">
    <location>
        <begin position="1012"/>
        <end position="1433"/>
    </location>
</feature>
<feature type="region of interest" description="Nonhelical region 2 (NC2)">
    <location>
        <begin position="1434"/>
        <end position="1472"/>
    </location>
</feature>
<feature type="region of interest" description="Disordered" evidence="2">
    <location>
        <begin position="1468"/>
        <end position="1517"/>
    </location>
</feature>
<feature type="region of interest" description="Triple-helical region 1 (COL1) with 2 imperfections">
    <location>
        <begin position="1473"/>
        <end position="1578"/>
    </location>
</feature>
<feature type="region of interest" description="Nonhelical region 1 (NC1)">
    <location>
        <begin position="1579"/>
        <end position="1604"/>
    </location>
</feature>
<feature type="short sequence motif" description="Cell attachment site" evidence="1">
    <location>
        <begin position="540"/>
        <end position="542"/>
    </location>
</feature>
<feature type="short sequence motif" description="Cell attachment site" evidence="1">
    <location>
        <begin position="1006"/>
        <end position="1008"/>
    </location>
</feature>
<feature type="short sequence motif" description="Cell attachment site" evidence="1">
    <location>
        <begin position="1227"/>
        <end position="1229"/>
    </location>
</feature>
<feature type="compositionally biased region" description="Basic and acidic residues" evidence="2">
    <location>
        <begin position="301"/>
        <end position="311"/>
    </location>
</feature>
<feature type="compositionally biased region" description="Low complexity" evidence="2">
    <location>
        <begin position="383"/>
        <end position="397"/>
    </location>
</feature>
<feature type="compositionally biased region" description="Basic and acidic residues" evidence="2">
    <location>
        <begin position="398"/>
        <end position="407"/>
    </location>
</feature>
<feature type="compositionally biased region" description="Pro residues" evidence="2">
    <location>
        <begin position="449"/>
        <end position="460"/>
    </location>
</feature>
<feature type="compositionally biased region" description="Gly residues" evidence="2">
    <location>
        <begin position="486"/>
        <end position="495"/>
    </location>
</feature>
<feature type="compositionally biased region" description="Basic and acidic residues" evidence="2">
    <location>
        <begin position="674"/>
        <end position="684"/>
    </location>
</feature>
<feature type="compositionally biased region" description="Low complexity" evidence="2">
    <location>
        <begin position="686"/>
        <end position="702"/>
    </location>
</feature>
<feature type="compositionally biased region" description="Low complexity" evidence="2">
    <location>
        <begin position="766"/>
        <end position="781"/>
    </location>
</feature>
<feature type="compositionally biased region" description="Low complexity" evidence="2">
    <location>
        <begin position="792"/>
        <end position="808"/>
    </location>
</feature>
<feature type="compositionally biased region" description="Low complexity" evidence="2">
    <location>
        <begin position="826"/>
        <end position="846"/>
    </location>
</feature>
<feature type="compositionally biased region" description="Basic and acidic residues" evidence="2">
    <location>
        <begin position="864"/>
        <end position="873"/>
    </location>
</feature>
<feature type="compositionally biased region" description="Pro residues" evidence="2">
    <location>
        <begin position="905"/>
        <end position="917"/>
    </location>
</feature>
<feature type="compositionally biased region" description="Pro residues" evidence="2">
    <location>
        <begin position="1044"/>
        <end position="1055"/>
    </location>
</feature>
<feature type="compositionally biased region" description="Pro residues" evidence="2">
    <location>
        <begin position="1160"/>
        <end position="1169"/>
    </location>
</feature>
<feature type="compositionally biased region" description="Pro residues" evidence="2">
    <location>
        <begin position="1199"/>
        <end position="1208"/>
    </location>
</feature>
<feature type="compositionally biased region" description="Basic and acidic residues" evidence="2">
    <location>
        <begin position="1217"/>
        <end position="1226"/>
    </location>
</feature>
<feature type="compositionally biased region" description="Low complexity" evidence="2">
    <location>
        <begin position="1271"/>
        <end position="1284"/>
    </location>
</feature>
<feature type="compositionally biased region" description="Pro residues" evidence="2">
    <location>
        <begin position="1286"/>
        <end position="1302"/>
    </location>
</feature>
<feature type="compositionally biased region" description="Pro residues" evidence="2">
    <location>
        <begin position="1330"/>
        <end position="1342"/>
    </location>
</feature>
<feature type="compositionally biased region" description="Low complexity" evidence="2">
    <location>
        <begin position="1369"/>
        <end position="1378"/>
    </location>
</feature>
<feature type="compositionally biased region" description="Gly residues" evidence="2">
    <location>
        <begin position="1386"/>
        <end position="1395"/>
    </location>
</feature>
<feature type="compositionally biased region" description="Low complexity" evidence="2">
    <location>
        <begin position="1420"/>
        <end position="1429"/>
    </location>
</feature>
<feature type="glycosylation site" description="N-linked (GlcNAc...) asparagine" evidence="1">
    <location>
        <position position="47"/>
    </location>
</feature>
<feature type="glycosylation site" description="N-linked (GlcNAc...) asparagine" evidence="1">
    <location>
        <position position="327"/>
    </location>
</feature>
<feature type="splice variant" id="VSP_024259" description="In isoform 2." evidence="9">
    <location>
        <position position="1052"/>
    </location>
</feature>
<feature type="splice variant" id="VSP_024260" description="In isoform 2." evidence="9">
    <location>
        <position position="1161"/>
    </location>
</feature>
<feature type="sequence variant" id="VAR_031440" description="In dbSNP:rs2228552." evidence="5">
    <original>T</original>
    <variation>K</variation>
    <location>
        <position position="62"/>
    </location>
</feature>
<feature type="sequence variant" id="VAR_048778" description="In dbSNP:rs6699645.">
    <original>R</original>
    <variation>Q</variation>
    <location>
        <position position="418"/>
    </location>
</feature>
<feature type="sequence variant" id="VAR_048779" description="In dbSNP:rs34770879.">
    <original>G</original>
    <variation>S</variation>
    <location>
        <position position="745"/>
    </location>
</feature>
<feature type="sequence conflict" description="In Ref. 7; AAB25797." evidence="10" ref="7">
    <original>D</original>
    <variation>G</variation>
    <location>
        <position position="419"/>
    </location>
</feature>
<feature type="sequence conflict" description="In Ref. 1; AAA58427." evidence="10" ref="1">
    <original>GR</original>
    <variation>A</variation>
    <location>
        <begin position="420"/>
        <end position="421"/>
    </location>
</feature>
<feature type="sequence conflict" description="In Ref. 1; AAA58427." evidence="10" ref="1">
    <original>P</original>
    <variation>R</variation>
    <location>
        <position position="538"/>
    </location>
</feature>
<feature type="sequence conflict" description="In Ref. 6; CAA33142/CAA33085." evidence="10" ref="6">
    <original>RD</original>
    <variation>VM</variation>
    <location>
        <begin position="848"/>
        <end position="849"/>
    </location>
</feature>
<feature type="sequence conflict" description="In Ref. 1; AAA58427." evidence="10" ref="1">
    <original>P</original>
    <variation>T</variation>
    <location>
        <position position="1161"/>
    </location>
</feature>
<feature type="sequence conflict" description="In Ref. 1; AAA58427." evidence="10" ref="1">
    <original>P</original>
    <variation>T</variation>
    <location>
        <position position="1164"/>
    </location>
</feature>
<feature type="sequence conflict" description="In Ref. 1; AAA58427." evidence="10" ref="1">
    <original>P</original>
    <variation>S</variation>
    <location>
        <position position="1166"/>
    </location>
</feature>
<protein>
    <recommendedName>
        <fullName>Collagen alpha-1(XVI) chain</fullName>
    </recommendedName>
</protein>
<reference key="1">
    <citation type="journal article" date="1992" name="Proc. Natl. Acad. Sci. U.S.A.">
        <title>Cloning and chromosomal location of human alpha 1(XVI) collagen.</title>
        <authorList>
            <person name="Pan T.-C."/>
            <person name="Zhang R.-Z."/>
            <person name="Mattei M.-G."/>
            <person name="Timpl R."/>
            <person name="Chu M.-L."/>
        </authorList>
    </citation>
    <scope>NUCLEOTIDE SEQUENCE [MRNA] (ISOFORM 1)</scope>
    <scope>VARIANT LYS-62</scope>
    <source>
        <tissue>Fibroblast</tissue>
    </source>
</reference>
<reference key="2">
    <citation type="journal article" date="2006" name="Nature">
        <title>The DNA sequence and biological annotation of human chromosome 1.</title>
        <authorList>
            <person name="Gregory S.G."/>
            <person name="Barlow K.F."/>
            <person name="McLay K.E."/>
            <person name="Kaul R."/>
            <person name="Swarbreck D."/>
            <person name="Dunham A."/>
            <person name="Scott C.E."/>
            <person name="Howe K.L."/>
            <person name="Woodfine K."/>
            <person name="Spencer C.C.A."/>
            <person name="Jones M.C."/>
            <person name="Gillson C."/>
            <person name="Searle S."/>
            <person name="Zhou Y."/>
            <person name="Kokocinski F."/>
            <person name="McDonald L."/>
            <person name="Evans R."/>
            <person name="Phillips K."/>
            <person name="Atkinson A."/>
            <person name="Cooper R."/>
            <person name="Jones C."/>
            <person name="Hall R.E."/>
            <person name="Andrews T.D."/>
            <person name="Lloyd C."/>
            <person name="Ainscough R."/>
            <person name="Almeida J.P."/>
            <person name="Ambrose K.D."/>
            <person name="Anderson F."/>
            <person name="Andrew R.W."/>
            <person name="Ashwell R.I.S."/>
            <person name="Aubin K."/>
            <person name="Babbage A.K."/>
            <person name="Bagguley C.L."/>
            <person name="Bailey J."/>
            <person name="Beasley H."/>
            <person name="Bethel G."/>
            <person name="Bird C.P."/>
            <person name="Bray-Allen S."/>
            <person name="Brown J.Y."/>
            <person name="Brown A.J."/>
            <person name="Buckley D."/>
            <person name="Burton J."/>
            <person name="Bye J."/>
            <person name="Carder C."/>
            <person name="Chapman J.C."/>
            <person name="Clark S.Y."/>
            <person name="Clarke G."/>
            <person name="Clee C."/>
            <person name="Cobley V."/>
            <person name="Collier R.E."/>
            <person name="Corby N."/>
            <person name="Coville G.J."/>
            <person name="Davies J."/>
            <person name="Deadman R."/>
            <person name="Dunn M."/>
            <person name="Earthrowl M."/>
            <person name="Ellington A.G."/>
            <person name="Errington H."/>
            <person name="Frankish A."/>
            <person name="Frankland J."/>
            <person name="French L."/>
            <person name="Garner P."/>
            <person name="Garnett J."/>
            <person name="Gay L."/>
            <person name="Ghori M.R.J."/>
            <person name="Gibson R."/>
            <person name="Gilby L.M."/>
            <person name="Gillett W."/>
            <person name="Glithero R.J."/>
            <person name="Grafham D.V."/>
            <person name="Griffiths C."/>
            <person name="Griffiths-Jones S."/>
            <person name="Grocock R."/>
            <person name="Hammond S."/>
            <person name="Harrison E.S.I."/>
            <person name="Hart E."/>
            <person name="Haugen E."/>
            <person name="Heath P.D."/>
            <person name="Holmes S."/>
            <person name="Holt K."/>
            <person name="Howden P.J."/>
            <person name="Hunt A.R."/>
            <person name="Hunt S.E."/>
            <person name="Hunter G."/>
            <person name="Isherwood J."/>
            <person name="James R."/>
            <person name="Johnson C."/>
            <person name="Johnson D."/>
            <person name="Joy A."/>
            <person name="Kay M."/>
            <person name="Kershaw J.K."/>
            <person name="Kibukawa M."/>
            <person name="Kimberley A.M."/>
            <person name="King A."/>
            <person name="Knights A.J."/>
            <person name="Lad H."/>
            <person name="Laird G."/>
            <person name="Lawlor S."/>
            <person name="Leongamornlert D.A."/>
            <person name="Lloyd D.M."/>
            <person name="Loveland J."/>
            <person name="Lovell J."/>
            <person name="Lush M.J."/>
            <person name="Lyne R."/>
            <person name="Martin S."/>
            <person name="Mashreghi-Mohammadi M."/>
            <person name="Matthews L."/>
            <person name="Matthews N.S.W."/>
            <person name="McLaren S."/>
            <person name="Milne S."/>
            <person name="Mistry S."/>
            <person name="Moore M.J.F."/>
            <person name="Nickerson T."/>
            <person name="O'Dell C.N."/>
            <person name="Oliver K."/>
            <person name="Palmeiri A."/>
            <person name="Palmer S.A."/>
            <person name="Parker A."/>
            <person name="Patel D."/>
            <person name="Pearce A.V."/>
            <person name="Peck A.I."/>
            <person name="Pelan S."/>
            <person name="Phelps K."/>
            <person name="Phillimore B.J."/>
            <person name="Plumb R."/>
            <person name="Rajan J."/>
            <person name="Raymond C."/>
            <person name="Rouse G."/>
            <person name="Saenphimmachak C."/>
            <person name="Sehra H.K."/>
            <person name="Sheridan E."/>
            <person name="Shownkeen R."/>
            <person name="Sims S."/>
            <person name="Skuce C.D."/>
            <person name="Smith M."/>
            <person name="Steward C."/>
            <person name="Subramanian S."/>
            <person name="Sycamore N."/>
            <person name="Tracey A."/>
            <person name="Tromans A."/>
            <person name="Van Helmond Z."/>
            <person name="Wall M."/>
            <person name="Wallis J.M."/>
            <person name="White S."/>
            <person name="Whitehead S.L."/>
            <person name="Wilkinson J.E."/>
            <person name="Willey D.L."/>
            <person name="Williams H."/>
            <person name="Wilming L."/>
            <person name="Wray P.W."/>
            <person name="Wu Z."/>
            <person name="Coulson A."/>
            <person name="Vaudin M."/>
            <person name="Sulston J.E."/>
            <person name="Durbin R.M."/>
            <person name="Hubbard T."/>
            <person name="Wooster R."/>
            <person name="Dunham I."/>
            <person name="Carter N.P."/>
            <person name="McVean G."/>
            <person name="Ross M.T."/>
            <person name="Harrow J."/>
            <person name="Olson M.V."/>
            <person name="Beck S."/>
            <person name="Rogers J."/>
            <person name="Bentley D.R."/>
        </authorList>
    </citation>
    <scope>NUCLEOTIDE SEQUENCE [LARGE SCALE GENOMIC DNA]</scope>
</reference>
<reference key="3">
    <citation type="journal article" date="1995" name="Eur. J. Biochem.">
        <title>Recombinant analysis of human alpha 1 (XVI) collagen. Evidence for processing of the N-terminal globular domain.</title>
        <authorList>
            <person name="Tillet E."/>
            <person name="Mann K."/>
            <person name="Nischt R."/>
            <person name="Pan T.-C."/>
            <person name="Chu M.-L."/>
            <person name="Timpl R."/>
        </authorList>
    </citation>
    <scope>PROTEIN SEQUENCE OF 22-33</scope>
    <scope>SUBUNIT</scope>
    <scope>GLYCOSYLATION</scope>
</reference>
<reference key="4">
    <citation type="journal article" date="2004" name="J. Mol. Biol.">
        <title>Molecular structure and interaction of recombinant human type XVI collagen.</title>
        <authorList>
            <person name="Kassner A."/>
            <person name="Tiedemann K."/>
            <person name="Notbohm H."/>
            <person name="Ludwig T."/>
            <person name="Morgelin M."/>
            <person name="Reinhardt D.P."/>
            <person name="Chu M.-L."/>
            <person name="Bruckner P."/>
            <person name="Grassel S."/>
        </authorList>
    </citation>
    <scope>PROTEIN SEQUENCE OF 22-30; 257-265 AND 941-950</scope>
    <scope>SUBUNIT</scope>
    <scope>INTERACTION WITH FBN1 AND FN1</scope>
    <scope>GLYCOSYLATION</scope>
</reference>
<reference key="5">
    <citation type="submission" date="2005-03" db="EMBL/GenBank/DDBJ databases">
        <authorList>
            <person name="Totoki Y."/>
            <person name="Toyoda A."/>
            <person name="Takeda T."/>
            <person name="Sakaki Y."/>
            <person name="Tanaka A."/>
            <person name="Yokoyama S."/>
            <person name="Ohara O."/>
            <person name="Nagase T."/>
            <person name="Kikuno R.F."/>
        </authorList>
    </citation>
    <scope>NUCLEOTIDE SEQUENCE [LARGE SCALE MRNA] OF 111-1604 (ISOFORM 2)</scope>
    <source>
        <tissue>Spleen</tissue>
    </source>
</reference>
<reference key="6">
    <citation type="submission" date="1989-04" db="EMBL/GenBank/DDBJ databases">
        <authorList>
            <person name="Kimura S."/>
        </authorList>
    </citation>
    <scope>NUCLEOTIDE SEQUENCE [MRNA] OF 403-849</scope>
    <source>
        <tissue>Placenta</tissue>
    </source>
</reference>
<reference key="7">
    <citation type="journal article" date="1992" name="J. Biochem.">
        <title>Molecular cloning and partial characterization of a novel collagen chain, alpha 1(XVI), consisting of repetitive collagenous domains and cysteine-containing non-collagenous segments.</title>
        <authorList>
            <person name="Yamaguchi N."/>
            <person name="Kimura S."/>
            <person name="McBride O.W."/>
            <person name="Hori H."/>
            <person name="Yamada Y."/>
            <person name="Kanamori T."/>
            <person name="Yamakoshi H."/>
            <person name="Nagai Y."/>
        </authorList>
    </citation>
    <scope>NUCLEOTIDE SEQUENCE [MRNA] OF 418-1604 (ISOFORM 1)</scope>
    <source>
        <tissue>Placenta</tissue>
    </source>
</reference>
<reference key="8">
    <citation type="journal article" date="2004" name="Proc. Natl. Acad. Sci. U.S.A.">
        <title>Large-scale cDNA transfection screening for genes related to cancer development and progression.</title>
        <authorList>
            <person name="Wan D."/>
            <person name="Gong Y."/>
            <person name="Qin W."/>
            <person name="Zhang P."/>
            <person name="Li J."/>
            <person name="Wei L."/>
            <person name="Zhou X."/>
            <person name="Li H."/>
            <person name="Qiu X."/>
            <person name="Zhong F."/>
            <person name="He L."/>
            <person name="Yu J."/>
            <person name="Yao G."/>
            <person name="Jiang H."/>
            <person name="Qian L."/>
            <person name="Yu Y."/>
            <person name="Shu H."/>
            <person name="Chen X."/>
            <person name="Xu H."/>
            <person name="Guo M."/>
            <person name="Pan Z."/>
            <person name="Chen Y."/>
            <person name="Ge C."/>
            <person name="Yang S."/>
            <person name="Gu J."/>
        </authorList>
    </citation>
    <scope>NUCLEOTIDE SEQUENCE [LARGE SCALE MRNA] OF 1387-1604</scope>
</reference>
<reference key="9">
    <citation type="journal article" date="1996" name="Eur. J. Biochem.">
        <title>Biosynthesis and processing of type XVI collagen in human fibroblasts and smooth muscle cells.</title>
        <authorList>
            <person name="Grassel S."/>
            <person name="Timpl R."/>
            <person name="Tan E.M.L."/>
            <person name="Chu M.-L."/>
        </authorList>
    </citation>
    <scope>SUBUNIT</scope>
    <scope>SUBCELLULAR LOCATION</scope>
</reference>
<reference key="10">
    <citation type="journal article" date="2003" name="Matrix Biol.">
        <title>Discrete integration of collagen XVI into tissue-specific collagen fibrils or beaded microfibrils.</title>
        <authorList>
            <person name="Kassner A."/>
            <person name="Hansen U."/>
            <person name="Miosge N."/>
            <person name="Reinhardt D.P."/>
            <person name="Aigner T."/>
            <person name="Bruckner-Tuderman L."/>
            <person name="Bruckner P."/>
            <person name="Grassel S."/>
        </authorList>
    </citation>
    <scope>TISSUE SPECIFICITY</scope>
</reference>
<reference key="11">
    <citation type="journal article" date="2006" name="J. Biol. Chem.">
        <title>Collagen XVI harbors an integrin alpha1 beta1 recognition site in its C-terminal domains.</title>
        <authorList>
            <person name="Eble J.A."/>
            <person name="Kassner A."/>
            <person name="Niland S."/>
            <person name="Morgelin M."/>
            <person name="Grifka J."/>
            <person name="Grassel S."/>
        </authorList>
    </citation>
    <scope>FUNCTION</scope>
    <scope>SUBUNIT</scope>
    <scope>INTERACTION WITH INTEGRIN ALPHA-1/BETA-1 AND INTEGRIN ALPHA-2/BETA-1</scope>
</reference>
<comment type="function">
    <text evidence="6">Involved in mediating cell attachment and inducing integrin-mediated cellular reactions, such as cell spreading and alterations in cell morphology.</text>
</comment>
<comment type="subunit">
    <text evidence="4 6 7 8">Homotrimer. Interacts with FBN1, fibronectin and integrins ITGA1/ITGB1 and ITGA2/ITGB1. Integrin ITGA1/ITGB1 binds to a unique site within COL16A1 located close to its C-terminal end between collagenous domains COL1-COL3.</text>
</comment>
<comment type="subcellular location">
    <subcellularLocation>
        <location evidence="8">Secreted</location>
        <location evidence="8">Extracellular space</location>
        <location evidence="8">Extracellular matrix</location>
    </subcellularLocation>
</comment>
<comment type="alternative products">
    <event type="alternative splicing"/>
    <isoform>
        <id>Q07092-1</id>
        <name>1</name>
        <sequence type="displayed"/>
    </isoform>
    <isoform>
        <id>Q07092-2</id>
        <name>2</name>
        <sequence type="described" ref="VSP_024259 VSP_024260"/>
    </isoform>
</comment>
<comment type="tissue specificity">
    <text evidence="3">In papillary dermis, is a component of specialized fibrillin-1-containing microfibrils, whereas in territorial cartilage matrix, it is localized to a discrete population of thin, weakly banded collagen fibrils in association with other collagens (at protein level). In the placenta, where it is found in the amnion, a membranous tissue lining the amniotic cavity. Within the amnion, it is found in an acellular, relatively dense layer of a complex network of reticular fibers. Also located to a fibroblast layer beneath this dense layer. Exists in tissues in association with other types of collagen.</text>
</comment>
<comment type="developmental stage">
    <text>Transiently elevated expression during gestation, and decrease at term.</text>
</comment>
<comment type="domain">
    <text>This sequence defines eighteen different domains, nine triple-helical domains (COL9 to COL1) and ten non-triple-helical domains (NC10 to NC1). The numerous interruptions in the triple helix may make this molecule either elastic or flexible.</text>
</comment>
<comment type="PTM">
    <text>Prolines at the third position of the tripeptide repeating unit (G-X-Y) are hydroxylated in some or all of the chains.</text>
</comment>
<comment type="PTM">
    <text evidence="4 7">Glycosylated.</text>
</comment>
<comment type="similarity">
    <text evidence="10">Belongs to the fibril-associated collagens with interrupted helices (FACIT) family.</text>
</comment>
<comment type="online information" name="Atlas of Genetics and Cytogenetics in Oncology and Haematology">
    <link uri="https://atlasgeneticsoncology.org/gene/44542/COL16A1"/>
</comment>
<dbReference type="EMBL" id="M92642">
    <property type="protein sequence ID" value="AAA58427.1"/>
    <property type="molecule type" value="mRNA"/>
</dbReference>
<dbReference type="EMBL" id="AC114488">
    <property type="status" value="NOT_ANNOTATED_CDS"/>
    <property type="molecule type" value="Genomic_DNA"/>
</dbReference>
<dbReference type="EMBL" id="AB209571">
    <property type="protein sequence ID" value="BAD92808.1"/>
    <property type="molecule type" value="mRNA"/>
</dbReference>
<dbReference type="EMBL" id="X14963">
    <property type="protein sequence ID" value="CAA33085.1"/>
    <property type="molecule type" value="mRNA"/>
</dbReference>
<dbReference type="EMBL" id="X15038">
    <property type="protein sequence ID" value="CAA33142.1"/>
    <property type="molecule type" value="mRNA"/>
</dbReference>
<dbReference type="EMBL" id="S57132">
    <property type="protein sequence ID" value="AAB25797.1"/>
    <property type="molecule type" value="mRNA"/>
</dbReference>
<dbReference type="EMBL" id="AF370368">
    <property type="protein sequence ID" value="AAQ15204.1"/>
    <property type="molecule type" value="mRNA"/>
</dbReference>
<dbReference type="CCDS" id="CCDS41297.1">
    <molecule id="Q07092-1"/>
</dbReference>
<dbReference type="PIR" id="S23810">
    <property type="entry name" value="S23810"/>
</dbReference>
<dbReference type="RefSeq" id="NP_001847.3">
    <molecule id="Q07092-1"/>
    <property type="nucleotide sequence ID" value="NM_001856.3"/>
</dbReference>
<dbReference type="BioGRID" id="107703">
    <property type="interactions" value="23"/>
</dbReference>
<dbReference type="ComplexPortal" id="CPX-1757">
    <property type="entry name" value="Collagen type XVI trimer"/>
</dbReference>
<dbReference type="FunCoup" id="Q07092">
    <property type="interactions" value="127"/>
</dbReference>
<dbReference type="IntAct" id="Q07092">
    <property type="interactions" value="13"/>
</dbReference>
<dbReference type="MINT" id="Q07092"/>
<dbReference type="STRING" id="9606.ENSP00000362776"/>
<dbReference type="GlyConnect" id="1133">
    <property type="glycosylation" value="1 N-Linked glycan (1 site)"/>
</dbReference>
<dbReference type="GlyCosmos" id="Q07092">
    <property type="glycosylation" value="2 sites, 1 glycan"/>
</dbReference>
<dbReference type="GlyGen" id="Q07092">
    <property type="glycosylation" value="5 sites, 1 N-linked glycan (1 site)"/>
</dbReference>
<dbReference type="iPTMnet" id="Q07092"/>
<dbReference type="PhosphoSitePlus" id="Q07092"/>
<dbReference type="BioMuta" id="COL16A1"/>
<dbReference type="DMDM" id="143811380"/>
<dbReference type="jPOST" id="Q07092"/>
<dbReference type="MassIVE" id="Q07092"/>
<dbReference type="PaxDb" id="9606-ENSP00000362776"/>
<dbReference type="PeptideAtlas" id="Q07092"/>
<dbReference type="ProteomicsDB" id="58503">
    <molecule id="Q07092-1"/>
</dbReference>
<dbReference type="ProteomicsDB" id="58504">
    <molecule id="Q07092-2"/>
</dbReference>
<dbReference type="Antibodypedia" id="8436">
    <property type="antibodies" value="68 antibodies from 20 providers"/>
</dbReference>
<dbReference type="DNASU" id="1307"/>
<dbReference type="Ensembl" id="ENST00000373672.8">
    <molecule id="Q07092-1"/>
    <property type="protein sequence ID" value="ENSP00000362776.3"/>
    <property type="gene ID" value="ENSG00000084636.18"/>
</dbReference>
<dbReference type="GeneID" id="1307"/>
<dbReference type="KEGG" id="hsa:1307"/>
<dbReference type="MANE-Select" id="ENST00000373672.8">
    <property type="protein sequence ID" value="ENSP00000362776.3"/>
    <property type="RefSeq nucleotide sequence ID" value="NM_001856.4"/>
    <property type="RefSeq protein sequence ID" value="NP_001847.3"/>
</dbReference>
<dbReference type="UCSC" id="uc001btk.2">
    <molecule id="Q07092-1"/>
    <property type="organism name" value="human"/>
</dbReference>
<dbReference type="AGR" id="HGNC:2193"/>
<dbReference type="CTD" id="1307"/>
<dbReference type="DisGeNET" id="1307"/>
<dbReference type="GeneCards" id="COL16A1"/>
<dbReference type="HGNC" id="HGNC:2193">
    <property type="gene designation" value="COL16A1"/>
</dbReference>
<dbReference type="HPA" id="ENSG00000084636">
    <property type="expression patterns" value="Tissue enhanced (ovary)"/>
</dbReference>
<dbReference type="MIM" id="120326">
    <property type="type" value="gene"/>
</dbReference>
<dbReference type="neXtProt" id="NX_Q07092"/>
<dbReference type="OpenTargets" id="ENSG00000084636"/>
<dbReference type="PharmGKB" id="PA26709"/>
<dbReference type="VEuPathDB" id="HostDB:ENSG00000084636"/>
<dbReference type="eggNOG" id="KOG3544">
    <property type="taxonomic scope" value="Eukaryota"/>
</dbReference>
<dbReference type="GeneTree" id="ENSGT00940000161782"/>
<dbReference type="HOGENOM" id="CLU_001074_2_2_1"/>
<dbReference type="InParanoid" id="Q07092"/>
<dbReference type="OMA" id="MGNSWQP"/>
<dbReference type="OrthoDB" id="5983381at2759"/>
<dbReference type="PAN-GO" id="Q07092">
    <property type="GO annotations" value="5 GO annotations based on evolutionary models"/>
</dbReference>
<dbReference type="PhylomeDB" id="Q07092"/>
<dbReference type="TreeFam" id="TF332900"/>
<dbReference type="PathwayCommons" id="Q07092"/>
<dbReference type="Reactome" id="R-HSA-1442490">
    <property type="pathway name" value="Collagen degradation"/>
</dbReference>
<dbReference type="Reactome" id="R-HSA-1650814">
    <property type="pathway name" value="Collagen biosynthesis and modifying enzymes"/>
</dbReference>
<dbReference type="Reactome" id="R-HSA-216083">
    <property type="pathway name" value="Integrin cell surface interactions"/>
</dbReference>
<dbReference type="Reactome" id="R-HSA-8948216">
    <property type="pathway name" value="Collagen chain trimerization"/>
</dbReference>
<dbReference type="SignaLink" id="Q07092"/>
<dbReference type="BioGRID-ORCS" id="1307">
    <property type="hits" value="7 hits in 1139 CRISPR screens"/>
</dbReference>
<dbReference type="ChiTaRS" id="COL16A1">
    <property type="organism name" value="human"/>
</dbReference>
<dbReference type="GeneWiki" id="Collagen,_type_XVI,_alpha_1"/>
<dbReference type="GenomeRNAi" id="1307"/>
<dbReference type="Pharos" id="Q07092">
    <property type="development level" value="Tbio"/>
</dbReference>
<dbReference type="PRO" id="PR:Q07092"/>
<dbReference type="Proteomes" id="UP000005640">
    <property type="component" value="Chromosome 1"/>
</dbReference>
<dbReference type="RNAct" id="Q07092">
    <property type="molecule type" value="protein"/>
</dbReference>
<dbReference type="Bgee" id="ENSG00000084636">
    <property type="expression patterns" value="Expressed in tibia and 198 other cell types or tissues"/>
</dbReference>
<dbReference type="ExpressionAtlas" id="Q07092">
    <property type="expression patterns" value="baseline and differential"/>
</dbReference>
<dbReference type="GO" id="GO:0005604">
    <property type="term" value="C:basement membrane"/>
    <property type="evidence" value="ECO:0000318"/>
    <property type="project" value="GO_Central"/>
</dbReference>
<dbReference type="GO" id="GO:0005594">
    <property type="term" value="C:collagen type IX trimer"/>
    <property type="evidence" value="ECO:0000318"/>
    <property type="project" value="GO_Central"/>
</dbReference>
<dbReference type="GO" id="GO:0005597">
    <property type="term" value="C:collagen type XVI trimer"/>
    <property type="evidence" value="ECO:0000304"/>
    <property type="project" value="ProtInc"/>
</dbReference>
<dbReference type="GO" id="GO:0062023">
    <property type="term" value="C:collagen-containing extracellular matrix"/>
    <property type="evidence" value="ECO:0007005"/>
    <property type="project" value="BHF-UCL"/>
</dbReference>
<dbReference type="GO" id="GO:0005788">
    <property type="term" value="C:endoplasmic reticulum lumen"/>
    <property type="evidence" value="ECO:0000304"/>
    <property type="project" value="Reactome"/>
</dbReference>
<dbReference type="GO" id="GO:0005576">
    <property type="term" value="C:extracellular region"/>
    <property type="evidence" value="ECO:0000304"/>
    <property type="project" value="Reactome"/>
</dbReference>
<dbReference type="GO" id="GO:0005615">
    <property type="term" value="C:extracellular space"/>
    <property type="evidence" value="ECO:0000318"/>
    <property type="project" value="GO_Central"/>
</dbReference>
<dbReference type="GO" id="GO:0030020">
    <property type="term" value="F:extracellular matrix structural constituent conferring tensile strength"/>
    <property type="evidence" value="ECO:0007005"/>
    <property type="project" value="BHF-UCL"/>
</dbReference>
<dbReference type="GO" id="GO:0005178">
    <property type="term" value="F:integrin binding"/>
    <property type="evidence" value="ECO:0000314"/>
    <property type="project" value="UniProtKB"/>
</dbReference>
<dbReference type="GO" id="GO:0007155">
    <property type="term" value="P:cell adhesion"/>
    <property type="evidence" value="ECO:0000314"/>
    <property type="project" value="UniProtKB"/>
</dbReference>
<dbReference type="GO" id="GO:0033627">
    <property type="term" value="P:cell adhesion mediated by integrin"/>
    <property type="evidence" value="ECO:0000314"/>
    <property type="project" value="CACAO"/>
</dbReference>
<dbReference type="GO" id="GO:0071230">
    <property type="term" value="P:cellular response to amino acid stimulus"/>
    <property type="evidence" value="ECO:0007669"/>
    <property type="project" value="Ensembl"/>
</dbReference>
<dbReference type="GO" id="GO:0007565">
    <property type="term" value="P:female pregnancy"/>
    <property type="evidence" value="ECO:0000304"/>
    <property type="project" value="ProtInc"/>
</dbReference>
<dbReference type="GO" id="GO:0033622">
    <property type="term" value="P:integrin activation"/>
    <property type="evidence" value="ECO:0000314"/>
    <property type="project" value="CACAO"/>
</dbReference>
<dbReference type="GO" id="GO:0007229">
    <property type="term" value="P:integrin-mediated signaling pathway"/>
    <property type="evidence" value="ECO:0000304"/>
    <property type="project" value="UniProtKB"/>
</dbReference>
<dbReference type="GO" id="GO:0051894">
    <property type="term" value="P:positive regulation of focal adhesion assembly"/>
    <property type="evidence" value="ECO:0000314"/>
    <property type="project" value="CACAO"/>
</dbReference>
<dbReference type="FunFam" id="2.60.120.200:FF:000094">
    <property type="entry name" value="Collagen type XVI alpha 1 chain"/>
    <property type="match status" value="1"/>
</dbReference>
<dbReference type="Gene3D" id="2.60.120.200">
    <property type="match status" value="1"/>
</dbReference>
<dbReference type="InterPro" id="IPR008160">
    <property type="entry name" value="Collagen"/>
</dbReference>
<dbReference type="InterPro" id="IPR050149">
    <property type="entry name" value="Collagen_superfamily"/>
</dbReference>
<dbReference type="InterPro" id="IPR013320">
    <property type="entry name" value="ConA-like_dom_sf"/>
</dbReference>
<dbReference type="InterPro" id="IPR048287">
    <property type="entry name" value="TSPN-like_N"/>
</dbReference>
<dbReference type="PANTHER" id="PTHR24023">
    <property type="entry name" value="COLLAGEN ALPHA"/>
    <property type="match status" value="1"/>
</dbReference>
<dbReference type="PANTHER" id="PTHR24023:SF1082">
    <property type="entry name" value="COLLAGEN TRIPLE HELIX REPEAT"/>
    <property type="match status" value="1"/>
</dbReference>
<dbReference type="Pfam" id="PF01391">
    <property type="entry name" value="Collagen"/>
    <property type="match status" value="9"/>
</dbReference>
<dbReference type="SMART" id="SM00210">
    <property type="entry name" value="TSPN"/>
    <property type="match status" value="1"/>
</dbReference>
<dbReference type="SUPFAM" id="SSF49899">
    <property type="entry name" value="Concanavalin A-like lectins/glucanases"/>
    <property type="match status" value="1"/>
</dbReference>
<name>COGA1_HUMAN</name>
<proteinExistence type="evidence at protein level"/>
<keyword id="KW-0025">Alternative splicing</keyword>
<keyword id="KW-0130">Cell adhesion</keyword>
<keyword id="KW-0176">Collagen</keyword>
<keyword id="KW-0903">Direct protein sequencing</keyword>
<keyword id="KW-0272">Extracellular matrix</keyword>
<keyword id="KW-0325">Glycoprotein</keyword>
<keyword id="KW-0379">Hydroxylation</keyword>
<keyword id="KW-1267">Proteomics identification</keyword>
<keyword id="KW-1185">Reference proteome</keyword>
<keyword id="KW-0677">Repeat</keyword>
<keyword id="KW-0964">Secreted</keyword>
<keyword id="KW-0732">Signal</keyword>
<gene>
    <name type="primary">COL16A1</name>
    <name type="ORF">FP1572</name>
</gene>
<sequence>MWVSWAPGLWLLGLWATFGHGANTGAQCPPSQQEGLKLEHSSSLPANVTGFNLIHRLSLMKTSAIKKIRNPKGPLILRLGAAPVTQPTRRVFPRGLPEEFALVLTLLLKKHTHQKTWYLFQVTDANGYPQISLEVNSQERSLELRAQGQDGDFVSCIFPVPQLFDLRWHKLMLSVAGRVASVHVDCSSASSQPLGPRRPMRPVGHVFLGLDAEQGKPVSFDLQQVHIYCDPELVLEEGCCEILPAGCPPETSKARRDTQSNELIEINPQSEGKVYTRCFCLEEPQNSEVDAQLTGRISQKAERGAKVHQETAADECPPCVHGARDSNVTLAPSGPKGGKGERGLPGPPGSKGEKGARGNDCVRISPDAPLQCAEGPKGEKGESGALGPSGLPGSTGEKGQKGEKGDGGIKGVPGKPGRDGRPGEICVIGPKGQKGDPGFVGPEGLAGEPGPPGLPGPPGIGLPGTPGDPGGPPGPKGDKGSSGIPGKEGPGGKPGKPGVKGEKGDPCEVCPTLPEGFQNFVGLPGKPGPKGEPGDPVPARGDPGIQGIKGEKGEPCLSCSSVVGAQHLVSSTGASGDVGSPGFGLPGLPGRAGVPGLKGEKGNFGEAGPAGSPGPPGPVGPAGIKGAKGEPCEPCPALSNLQDGDVRVVALPGPSGEKGEPGPPGFGLPGKQGKAGERGLKGQKGDAGNPGDPGTPGTTGRPGLSGEPGVQGPAGPKGEKGDGCTACPSLQGTVTDMAGRPGQPGPKGEQGPEGVGRPGKPGQPGLPGVQGPPGLKGVQGEPGPPGRGVQGPQGEPGAPGLPGIQGLPGPRGPPGPTGEKGAQGSPGVKGATGPVGPPGASVSGPPGRDGQQGQTGLRGTPGEKGPRGEKGEPGECSCPSQGDLIFSGMPGAPGLWMGSSWQPGPQGPPGIPGPPGPPGVPGLQGVPGNNGLPGQPGLTAELGSLPIEQHLLKSICGDCVQGQRAHPGYLVEKGEKGDQGIPGVPGLDNCAQCFLSLERPRAEEARGDNSEGDPGCVGSPGLPGPPGLPGQRGEEGPPGMRGSPGPPGPIGPPGFPGAVGSPGLPGLQGERGLTGLTGDKGEPGPPGQPGYPGATGPPGLPGIKGERGYTGSAGEKGEPGPPGSEGLPGPPGPAGPRGERGPQGNSGEKGDQGFQGQPGFPGPPGPPGFPGKVGSPGPPGPQAEKGSEGIRGPSGLPGSPGPPGPPGIQGPAGLDGLDGKDGKPGLRGDPGPAGPPGLMGPPGFKGKTGHPGLPGPKGDCGKPGPPGSTGRPGAEGEPGAMGPQGRPGPPGHVGPPGPPGQPGPAGISAVGLKGDRGATGERGLAGLPGQPGPPGHPGPPGEPGTDGAAGKEGPPGKQGFYGPPGPKGDPGAAGQKGQAGEKGRAGMPGGPGKSGSMGPVGPPGPAGERGHPGAPGPSGSPGLPGVPGSMGDMVNYDEIKRFIRQEIIKMFDERMAYYTSRMQFPMEMAAAPGRPGPPGKDGAPGRPGAPGSPGLPGQIGREGRQGLPGVRGLPGTKGEKGDIGIGIAGENGLPGPPGPQGPPGYGKMGATGPMGQQGIPGIPGPPGPMGQPGKAGHCNPSDCFGAMPMEQQYPPMKTMKGPFG</sequence>